<keyword id="KW-1003">Cell membrane</keyword>
<keyword id="KW-0966">Cell projection</keyword>
<keyword id="KW-0472">Membrane</keyword>
<keyword id="KW-0628">Postsynaptic cell membrane</keyword>
<keyword id="KW-1267">Proteomics identification</keyword>
<keyword id="KW-1185">Reference proteome</keyword>
<keyword id="KW-0770">Synapse</keyword>
<keyword id="KW-0812">Transmembrane</keyword>
<keyword id="KW-1133">Transmembrane helix</keyword>
<sequence length="247" mass="27007">MLPSQEASKLYHEHYMRNSRAIGVLWAIFTICFAIINVVVFIQPYWVGDSVSTPKPGYFGLFHYCVGSGLAGRELTCRGSFTDFSTIPSSAFKAAAFFVLLSMVLILGCITCFSLFFFCNTATVYKICAWMQLLAALCLVLGCMIFPDGWDAETIRDMCGAKTGKYSLGDCSVRWAYILAIIGILNALILSFLAFVLGNRQTDLLQEELKPENKDFVGSTVSSVLRPGGDVSGWGVLPCPVAHSQGP</sequence>
<proteinExistence type="evidence at protein level"/>
<organism>
    <name type="scientific">Homo sapiens</name>
    <name type="common">Human</name>
    <dbReference type="NCBI Taxonomy" id="9606"/>
    <lineage>
        <taxon>Eukaryota</taxon>
        <taxon>Metazoa</taxon>
        <taxon>Chordata</taxon>
        <taxon>Craniata</taxon>
        <taxon>Vertebrata</taxon>
        <taxon>Euteleostomi</taxon>
        <taxon>Mammalia</taxon>
        <taxon>Eutheria</taxon>
        <taxon>Euarchontoglires</taxon>
        <taxon>Primates</taxon>
        <taxon>Haplorrhini</taxon>
        <taxon>Catarrhini</taxon>
        <taxon>Hominidae</taxon>
        <taxon>Homo</taxon>
    </lineage>
</organism>
<protein>
    <recommendedName>
        <fullName evidence="6">LHFPL tetraspan subfamily member 4 protein</fullName>
    </recommendedName>
    <alternativeName>
        <fullName evidence="1">GABAA receptor regulatory Lhfpl4</fullName>
    </alternativeName>
    <alternativeName>
        <fullName evidence="6">Lipoma HMGIC fusion partner-like 4 protein</fullName>
    </alternativeName>
</protein>
<comment type="function">
    <text evidence="1">Plays a role in the regulation of inhibitory synapse formation and function by being involved in maintening gamma-aminobutyric acid receptors (GABAARs) clustering and their associated scaffold proteins at inhibitory synaptic sites. Acts in concert with NLGN2 to recruit or stabilize GABAARs.</text>
</comment>
<comment type="subunit">
    <text evidence="1 2 4">Interacts with GABA(A) receptor subunits (PubMed:28978485). Identified in a complex of 720 kDa composed of LHFPL4, NLGN2, GABRA1, GABRB2, GABRG2 and GABRB3 (By similarity). Interacts with GABRB3 (By similarity). Interacts with GABRA2 (By similarity). Interacts with GABRG2 (By similarity). Interacts with GABRA1 (PubMed:28978485). Interacts with NLGN2; leading to mutual regulation of protein level and synaptic clustering (By similarity).</text>
</comment>
<comment type="interaction">
    <interactant intactId="EBI-18016128">
        <id>Q7Z7J7</id>
    </interactant>
    <interactant intactId="EBI-10329860">
        <id>Q9Y6I9</id>
        <label>TEX264</label>
    </interactant>
    <organismsDiffer>false</organismsDiffer>
    <experiments>3</experiments>
</comment>
<comment type="subcellular location">
    <subcellularLocation>
        <location evidence="2">Cell projection</location>
        <location evidence="2">Dendrite</location>
    </subcellularLocation>
    <subcellularLocation>
        <location evidence="1">Postsynaptic cell membrane</location>
        <topology evidence="3">Multi-pass membrane protein</topology>
    </subcellularLocation>
    <text evidence="1 2">Specifically localizes to inhibitory postsynaptic sites (By similarity). Colocalizes with GPHN, GABRG2 and NLGN2 at inhibitory postsynaptic sites (By similarity).</text>
</comment>
<comment type="similarity">
    <text evidence="5">Belongs to the LHFP family.</text>
</comment>
<feature type="chain" id="PRO_0000285961" description="LHFPL tetraspan subfamily member 4 protein">
    <location>
        <begin position="1"/>
        <end position="247"/>
    </location>
</feature>
<feature type="transmembrane region" description="Helical" evidence="3">
    <location>
        <begin position="22"/>
        <end position="42"/>
    </location>
</feature>
<feature type="transmembrane region" description="Helical" evidence="3">
    <location>
        <begin position="97"/>
        <end position="117"/>
    </location>
</feature>
<feature type="transmembrane region" description="Helical" evidence="3">
    <location>
        <begin position="127"/>
        <end position="147"/>
    </location>
</feature>
<feature type="transmembrane region" description="Helical" evidence="3">
    <location>
        <begin position="178"/>
        <end position="198"/>
    </location>
</feature>
<evidence type="ECO:0000250" key="1">
    <source>
        <dbReference type="UniProtKB" id="Q5U4E0"/>
    </source>
</evidence>
<evidence type="ECO:0000250" key="2">
    <source>
        <dbReference type="UniProtKB" id="Q7TSY2"/>
    </source>
</evidence>
<evidence type="ECO:0000255" key="3"/>
<evidence type="ECO:0000269" key="4">
    <source>
    </source>
</evidence>
<evidence type="ECO:0000305" key="5"/>
<evidence type="ECO:0000312" key="6">
    <source>
        <dbReference type="HGNC" id="HGNC:29568"/>
    </source>
</evidence>
<accession>Q7Z7J7</accession>
<accession>A6NH76</accession>
<accession>Q29RV7</accession>
<dbReference type="EMBL" id="AY278320">
    <property type="protein sequence ID" value="AAP37013.1"/>
    <property type="molecule type" value="mRNA"/>
</dbReference>
<dbReference type="EMBL" id="AC026194">
    <property type="status" value="NOT_ANNOTATED_CDS"/>
    <property type="molecule type" value="Genomic_DNA"/>
</dbReference>
<dbReference type="CCDS" id="CCDS33691.1"/>
<dbReference type="RefSeq" id="NP_940962.1">
    <property type="nucleotide sequence ID" value="NM_198560.3"/>
</dbReference>
<dbReference type="RefSeq" id="XP_016861848.1">
    <property type="nucleotide sequence ID" value="XM_017006359.1"/>
</dbReference>
<dbReference type="SMR" id="Q7Z7J7"/>
<dbReference type="BioGRID" id="131972">
    <property type="interactions" value="45"/>
</dbReference>
<dbReference type="FunCoup" id="Q7Z7J7">
    <property type="interactions" value="126"/>
</dbReference>
<dbReference type="IntAct" id="Q7Z7J7">
    <property type="interactions" value="30"/>
</dbReference>
<dbReference type="STRING" id="9606.ENSP00000287585"/>
<dbReference type="TCDB" id="1.A.82.1.7">
    <property type="family name" value="the lhfpl tetraspan protein (ltsp) family"/>
</dbReference>
<dbReference type="PhosphoSitePlus" id="Q7Z7J7"/>
<dbReference type="SwissPalm" id="Q7Z7J7"/>
<dbReference type="BioMuta" id="LHFPL4"/>
<dbReference type="DMDM" id="74713775"/>
<dbReference type="MassIVE" id="Q7Z7J7"/>
<dbReference type="PaxDb" id="9606-ENSP00000287585"/>
<dbReference type="PeptideAtlas" id="Q7Z7J7"/>
<dbReference type="ProteomicsDB" id="69553"/>
<dbReference type="Antibodypedia" id="51961">
    <property type="antibodies" value="19 antibodies from 8 providers"/>
</dbReference>
<dbReference type="DNASU" id="375323"/>
<dbReference type="Ensembl" id="ENST00000287585.8">
    <property type="protein sequence ID" value="ENSP00000287585.6"/>
    <property type="gene ID" value="ENSG00000156959.9"/>
</dbReference>
<dbReference type="GeneID" id="375323"/>
<dbReference type="KEGG" id="hsa:375323"/>
<dbReference type="MANE-Select" id="ENST00000287585.8">
    <property type="protein sequence ID" value="ENSP00000287585.6"/>
    <property type="RefSeq nucleotide sequence ID" value="NM_198560.3"/>
    <property type="RefSeq protein sequence ID" value="NP_940962.1"/>
</dbReference>
<dbReference type="UCSC" id="uc003bry.3">
    <property type="organism name" value="human"/>
</dbReference>
<dbReference type="AGR" id="HGNC:29568"/>
<dbReference type="CTD" id="375323"/>
<dbReference type="DisGeNET" id="375323"/>
<dbReference type="GeneCards" id="LHFPL4"/>
<dbReference type="HGNC" id="HGNC:29568">
    <property type="gene designation" value="LHFPL4"/>
</dbReference>
<dbReference type="HPA" id="ENSG00000156959">
    <property type="expression patterns" value="Group enriched (brain, pituitary gland, retina)"/>
</dbReference>
<dbReference type="MIM" id="610240">
    <property type="type" value="gene"/>
</dbReference>
<dbReference type="neXtProt" id="NX_Q7Z7J7"/>
<dbReference type="OpenTargets" id="ENSG00000156959"/>
<dbReference type="VEuPathDB" id="HostDB:ENSG00000156959"/>
<dbReference type="eggNOG" id="KOG4026">
    <property type="taxonomic scope" value="Eukaryota"/>
</dbReference>
<dbReference type="GeneTree" id="ENSGT00990000203541"/>
<dbReference type="HOGENOM" id="CLU_084868_1_2_1"/>
<dbReference type="InParanoid" id="Q7Z7J7"/>
<dbReference type="OMA" id="RDMCGEH"/>
<dbReference type="OrthoDB" id="5873721at2759"/>
<dbReference type="PAN-GO" id="Q7Z7J7">
    <property type="GO annotations" value="6 GO annotations based on evolutionary models"/>
</dbReference>
<dbReference type="PhylomeDB" id="Q7Z7J7"/>
<dbReference type="TreeFam" id="TF321143"/>
<dbReference type="PathwayCommons" id="Q7Z7J7"/>
<dbReference type="SignaLink" id="Q7Z7J7"/>
<dbReference type="BioGRID-ORCS" id="375323">
    <property type="hits" value="21 hits in 1147 CRISPR screens"/>
</dbReference>
<dbReference type="ChiTaRS" id="LHFPL4">
    <property type="organism name" value="human"/>
</dbReference>
<dbReference type="GenomeRNAi" id="375323"/>
<dbReference type="Pharos" id="Q7Z7J7">
    <property type="development level" value="Tdark"/>
</dbReference>
<dbReference type="PRO" id="PR:Q7Z7J7"/>
<dbReference type="Proteomes" id="UP000005640">
    <property type="component" value="Chromosome 3"/>
</dbReference>
<dbReference type="RNAct" id="Q7Z7J7">
    <property type="molecule type" value="protein"/>
</dbReference>
<dbReference type="Bgee" id="ENSG00000156959">
    <property type="expression patterns" value="Expressed in cerebellar vermis and 88 other cell types or tissues"/>
</dbReference>
<dbReference type="GO" id="GO:0030425">
    <property type="term" value="C:dendrite"/>
    <property type="evidence" value="ECO:0007669"/>
    <property type="project" value="UniProtKB-SubCell"/>
</dbReference>
<dbReference type="GO" id="GO:0098982">
    <property type="term" value="C:GABA-ergic synapse"/>
    <property type="evidence" value="ECO:0007669"/>
    <property type="project" value="Ensembl"/>
</dbReference>
<dbReference type="GO" id="GO:0060077">
    <property type="term" value="C:inhibitory synapse"/>
    <property type="evidence" value="ECO:0000250"/>
    <property type="project" value="UniProtKB"/>
</dbReference>
<dbReference type="GO" id="GO:0005886">
    <property type="term" value="C:plasma membrane"/>
    <property type="evidence" value="ECO:0000318"/>
    <property type="project" value="GO_Central"/>
</dbReference>
<dbReference type="GO" id="GO:0045211">
    <property type="term" value="C:postsynaptic membrane"/>
    <property type="evidence" value="ECO:0000250"/>
    <property type="project" value="UniProtKB"/>
</dbReference>
<dbReference type="GO" id="GO:0099572">
    <property type="term" value="C:postsynaptic specialization"/>
    <property type="evidence" value="ECO:0007669"/>
    <property type="project" value="Ensembl"/>
</dbReference>
<dbReference type="GO" id="GO:0050811">
    <property type="term" value="F:GABA receptor binding"/>
    <property type="evidence" value="ECO:0000318"/>
    <property type="project" value="GO_Central"/>
</dbReference>
<dbReference type="GO" id="GO:0097112">
    <property type="term" value="P:gamma-aminobutyric acid receptor clustering"/>
    <property type="evidence" value="ECO:0000250"/>
    <property type="project" value="UniProtKB"/>
</dbReference>
<dbReference type="GO" id="GO:0099645">
    <property type="term" value="P:neurotransmitter receptor localization to postsynaptic specialization membrane"/>
    <property type="evidence" value="ECO:0007669"/>
    <property type="project" value="Ensembl"/>
</dbReference>
<dbReference type="GO" id="GO:1905702">
    <property type="term" value="P:regulation of inhibitory synapse assembly"/>
    <property type="evidence" value="ECO:0000250"/>
    <property type="project" value="UniProtKB"/>
</dbReference>
<dbReference type="GO" id="GO:0007605">
    <property type="term" value="P:sensory perception of sound"/>
    <property type="evidence" value="ECO:0000318"/>
    <property type="project" value="GO_Central"/>
</dbReference>
<dbReference type="FunFam" id="1.20.140.150:FF:000035">
    <property type="entry name" value="LHFPL tetraspan subfamily member 4 protein"/>
    <property type="match status" value="1"/>
</dbReference>
<dbReference type="InterPro" id="IPR019372">
    <property type="entry name" value="LHFPL"/>
</dbReference>
<dbReference type="PANTHER" id="PTHR12489:SF14">
    <property type="entry name" value="LHFPL TETRASPAN SUBFAMILY MEMBER 4 PROTEIN"/>
    <property type="match status" value="1"/>
</dbReference>
<dbReference type="PANTHER" id="PTHR12489">
    <property type="entry name" value="LIPOMA HMGIC FUSION PARTNER-LIKE PROTEIN"/>
    <property type="match status" value="1"/>
</dbReference>
<dbReference type="Pfam" id="PF10242">
    <property type="entry name" value="L_HMGIC_fpl"/>
    <property type="match status" value="1"/>
</dbReference>
<gene>
    <name evidence="6" type="primary">LHFPL4</name>
    <name evidence="6" type="synonym">GARLH4</name>
</gene>
<reference key="1">
    <citation type="submission" date="2003-04" db="EMBL/GenBank/DDBJ databases">
        <authorList>
            <person name="Huang C.Q."/>
            <person name="Wu S.L."/>
            <person name="Liu S."/>
        </authorList>
    </citation>
    <scope>NUCLEOTIDE SEQUENCE [LARGE SCALE MRNA]</scope>
</reference>
<reference key="2">
    <citation type="journal article" date="2006" name="Nature">
        <title>The DNA sequence, annotation and analysis of human chromosome 3.</title>
        <authorList>
            <person name="Muzny D.M."/>
            <person name="Scherer S.E."/>
            <person name="Kaul R."/>
            <person name="Wang J."/>
            <person name="Yu J."/>
            <person name="Sudbrak R."/>
            <person name="Buhay C.J."/>
            <person name="Chen R."/>
            <person name="Cree A."/>
            <person name="Ding Y."/>
            <person name="Dugan-Rocha S."/>
            <person name="Gill R."/>
            <person name="Gunaratne P."/>
            <person name="Harris R.A."/>
            <person name="Hawes A.C."/>
            <person name="Hernandez J."/>
            <person name="Hodgson A.V."/>
            <person name="Hume J."/>
            <person name="Jackson A."/>
            <person name="Khan Z.M."/>
            <person name="Kovar-Smith C."/>
            <person name="Lewis L.R."/>
            <person name="Lozado R.J."/>
            <person name="Metzker M.L."/>
            <person name="Milosavljevic A."/>
            <person name="Miner G.R."/>
            <person name="Morgan M.B."/>
            <person name="Nazareth L.V."/>
            <person name="Scott G."/>
            <person name="Sodergren E."/>
            <person name="Song X.-Z."/>
            <person name="Steffen D."/>
            <person name="Wei S."/>
            <person name="Wheeler D.A."/>
            <person name="Wright M.W."/>
            <person name="Worley K.C."/>
            <person name="Yuan Y."/>
            <person name="Zhang Z."/>
            <person name="Adams C.Q."/>
            <person name="Ansari-Lari M.A."/>
            <person name="Ayele M."/>
            <person name="Brown M.J."/>
            <person name="Chen G."/>
            <person name="Chen Z."/>
            <person name="Clendenning J."/>
            <person name="Clerc-Blankenburg K.P."/>
            <person name="Chen R."/>
            <person name="Chen Z."/>
            <person name="Davis C."/>
            <person name="Delgado O."/>
            <person name="Dinh H.H."/>
            <person name="Dong W."/>
            <person name="Draper H."/>
            <person name="Ernst S."/>
            <person name="Fu G."/>
            <person name="Gonzalez-Garay M.L."/>
            <person name="Garcia D.K."/>
            <person name="Gillett W."/>
            <person name="Gu J."/>
            <person name="Hao B."/>
            <person name="Haugen E."/>
            <person name="Havlak P."/>
            <person name="He X."/>
            <person name="Hennig S."/>
            <person name="Hu S."/>
            <person name="Huang W."/>
            <person name="Jackson L.R."/>
            <person name="Jacob L.S."/>
            <person name="Kelly S.H."/>
            <person name="Kube M."/>
            <person name="Levy R."/>
            <person name="Li Z."/>
            <person name="Liu B."/>
            <person name="Liu J."/>
            <person name="Liu W."/>
            <person name="Lu J."/>
            <person name="Maheshwari M."/>
            <person name="Nguyen B.-V."/>
            <person name="Okwuonu G.O."/>
            <person name="Palmeiri A."/>
            <person name="Pasternak S."/>
            <person name="Perez L.M."/>
            <person name="Phelps K.A."/>
            <person name="Plopper F.J."/>
            <person name="Qiang B."/>
            <person name="Raymond C."/>
            <person name="Rodriguez R."/>
            <person name="Saenphimmachak C."/>
            <person name="Santibanez J."/>
            <person name="Shen H."/>
            <person name="Shen Y."/>
            <person name="Subramanian S."/>
            <person name="Tabor P.E."/>
            <person name="Verduzco D."/>
            <person name="Waldron L."/>
            <person name="Wang J."/>
            <person name="Wang J."/>
            <person name="Wang Q."/>
            <person name="Williams G.A."/>
            <person name="Wong G.K.-S."/>
            <person name="Yao Z."/>
            <person name="Zhang J."/>
            <person name="Zhang X."/>
            <person name="Zhao G."/>
            <person name="Zhou J."/>
            <person name="Zhou Y."/>
            <person name="Nelson D."/>
            <person name="Lehrach H."/>
            <person name="Reinhardt R."/>
            <person name="Naylor S.L."/>
            <person name="Yang H."/>
            <person name="Olson M."/>
            <person name="Weinstock G."/>
            <person name="Gibbs R.A."/>
        </authorList>
    </citation>
    <scope>NUCLEOTIDE SEQUENCE [LARGE SCALE GENOMIC DNA]</scope>
</reference>
<reference key="3">
    <citation type="journal article" date="2017" name="Cell Rep.">
        <title>An essential role for the tetraspanin LHFPL4 in the cell-type-specific targeting and clustering of synaptic GABAA ceceptors.</title>
        <authorList>
            <person name="Davenport E.C."/>
            <person name="Pendolino V."/>
            <person name="Kontou G."/>
            <person name="McGee T.P."/>
            <person name="Sheehan D.F."/>
            <person name="Lopez-Domenech G."/>
            <person name="Farrant M."/>
            <person name="Kittler J.T."/>
        </authorList>
    </citation>
    <scope>INTERACTION WITH GABAARS</scope>
    <scope>INTERACTION WITH GABRA1</scope>
</reference>
<name>LHPL4_HUMAN</name>